<proteinExistence type="inferred from homology"/>
<sequence>MLIKIVIACVITAIIVALIAWKSAISYYKKVVEGKIGSADEKAREIIDEALKTAETKKREALLEAKEESLKTKNELERETKERRAELQRYEKRVLTKEETLDRKTEALEKKEAKLVAKEQELDRLRVEVEESHQKQVAELEKISGLTSEQAKEYLIKTVEDEVKHETAVLIKELESRAKEEAEKKAKDYVVTAIQKCAADHVAETTISVVQLPNDEMKGRIIGREGRNIRTLETLTGVDLIIDDTPEAVILSGFDPIRRETARIALEKLIVDGRIHPARIEEMVEKAQKEVETMIREEGEAATLEVGVHGIHPELVRLLGKMKFRTSYGQNALKHSIEVAILSGLLAGEIGVDVRIAKRAGLLHDIGKSVDHEMEGTHVQIGVDLCRKYKESPIVINAVEAHHGDVEFQSLIACIVQAADTISAARPGARRETLETYTNRLKQLEDITNGFKGVDKSFAIQAGREVRVMVVPDQVTDDDMVLLARDLSKKIESELEYPGMIKVNVIRESRVTDYAK</sequence>
<reference key="1">
    <citation type="submission" date="2007-11" db="EMBL/GenBank/DDBJ databases">
        <title>Complete genome sequence of Clostridium phytofermentans ISDg.</title>
        <authorList>
            <person name="Leschine S.B."/>
            <person name="Warnick T.A."/>
            <person name="Blanchard J.L."/>
            <person name="Schnell D.J."/>
            <person name="Petit E.L."/>
            <person name="LaTouf W.G."/>
            <person name="Copeland A."/>
            <person name="Lucas S."/>
            <person name="Lapidus A."/>
            <person name="Barry K."/>
            <person name="Glavina del Rio T."/>
            <person name="Dalin E."/>
            <person name="Tice H."/>
            <person name="Pitluck S."/>
            <person name="Kiss H."/>
            <person name="Brettin T."/>
            <person name="Bruce D."/>
            <person name="Detter J.C."/>
            <person name="Han C."/>
            <person name="Kuske C."/>
            <person name="Schmutz J."/>
            <person name="Larimer F."/>
            <person name="Land M."/>
            <person name="Hauser L."/>
            <person name="Kyrpides N."/>
            <person name="Kim E.A."/>
            <person name="Richardson P."/>
        </authorList>
    </citation>
    <scope>NUCLEOTIDE SEQUENCE [LARGE SCALE GENOMIC DNA]</scope>
    <source>
        <strain>ATCC 700394 / DSM 18823 / ISDg</strain>
    </source>
</reference>
<feature type="chain" id="PRO_0000344855" description="Ribonuclease Y">
    <location>
        <begin position="1"/>
        <end position="516"/>
    </location>
</feature>
<feature type="transmembrane region" description="Helical" evidence="1">
    <location>
        <begin position="1"/>
        <end position="21"/>
    </location>
</feature>
<feature type="domain" description="KH" evidence="1">
    <location>
        <begin position="206"/>
        <end position="269"/>
    </location>
</feature>
<feature type="domain" description="HD" evidence="2">
    <location>
        <begin position="332"/>
        <end position="425"/>
    </location>
</feature>
<gene>
    <name evidence="1" type="primary">rny</name>
    <name type="ordered locus">Cphy_2598</name>
</gene>
<comment type="function">
    <text evidence="1">Endoribonuclease that initiates mRNA decay.</text>
</comment>
<comment type="subcellular location">
    <subcellularLocation>
        <location evidence="1">Cell membrane</location>
        <topology evidence="1">Single-pass membrane protein</topology>
    </subcellularLocation>
</comment>
<comment type="similarity">
    <text evidence="1">Belongs to the RNase Y family.</text>
</comment>
<protein>
    <recommendedName>
        <fullName evidence="1">Ribonuclease Y</fullName>
        <shortName evidence="1">RNase Y</shortName>
        <ecNumber evidence="1">3.1.-.-</ecNumber>
    </recommendedName>
</protein>
<organism>
    <name type="scientific">Lachnoclostridium phytofermentans (strain ATCC 700394 / DSM 18823 / ISDg)</name>
    <name type="common">Clostridium phytofermentans</name>
    <dbReference type="NCBI Taxonomy" id="357809"/>
    <lineage>
        <taxon>Bacteria</taxon>
        <taxon>Bacillati</taxon>
        <taxon>Bacillota</taxon>
        <taxon>Clostridia</taxon>
        <taxon>Lachnospirales</taxon>
        <taxon>Lachnospiraceae</taxon>
    </lineage>
</organism>
<evidence type="ECO:0000255" key="1">
    <source>
        <dbReference type="HAMAP-Rule" id="MF_00335"/>
    </source>
</evidence>
<evidence type="ECO:0000255" key="2">
    <source>
        <dbReference type="PROSITE-ProRule" id="PRU01175"/>
    </source>
</evidence>
<keyword id="KW-1003">Cell membrane</keyword>
<keyword id="KW-0255">Endonuclease</keyword>
<keyword id="KW-0378">Hydrolase</keyword>
<keyword id="KW-0472">Membrane</keyword>
<keyword id="KW-0540">Nuclease</keyword>
<keyword id="KW-1185">Reference proteome</keyword>
<keyword id="KW-0694">RNA-binding</keyword>
<keyword id="KW-0812">Transmembrane</keyword>
<keyword id="KW-1133">Transmembrane helix</keyword>
<accession>A9KMU8</accession>
<dbReference type="EC" id="3.1.-.-" evidence="1"/>
<dbReference type="EMBL" id="CP000885">
    <property type="protein sequence ID" value="ABX42959.1"/>
    <property type="molecule type" value="Genomic_DNA"/>
</dbReference>
<dbReference type="RefSeq" id="WP_012200611.1">
    <property type="nucleotide sequence ID" value="NC_010001.1"/>
</dbReference>
<dbReference type="SMR" id="A9KMU8"/>
<dbReference type="STRING" id="357809.Cphy_2598"/>
<dbReference type="KEGG" id="cpy:Cphy_2598"/>
<dbReference type="eggNOG" id="COG1418">
    <property type="taxonomic scope" value="Bacteria"/>
</dbReference>
<dbReference type="HOGENOM" id="CLU_028328_1_0_9"/>
<dbReference type="Proteomes" id="UP000000370">
    <property type="component" value="Chromosome"/>
</dbReference>
<dbReference type="GO" id="GO:0005886">
    <property type="term" value="C:plasma membrane"/>
    <property type="evidence" value="ECO:0007669"/>
    <property type="project" value="UniProtKB-SubCell"/>
</dbReference>
<dbReference type="GO" id="GO:0003723">
    <property type="term" value="F:RNA binding"/>
    <property type="evidence" value="ECO:0007669"/>
    <property type="project" value="UniProtKB-UniRule"/>
</dbReference>
<dbReference type="GO" id="GO:0004521">
    <property type="term" value="F:RNA endonuclease activity"/>
    <property type="evidence" value="ECO:0007669"/>
    <property type="project" value="UniProtKB-UniRule"/>
</dbReference>
<dbReference type="GO" id="GO:0006402">
    <property type="term" value="P:mRNA catabolic process"/>
    <property type="evidence" value="ECO:0007669"/>
    <property type="project" value="UniProtKB-UniRule"/>
</dbReference>
<dbReference type="CDD" id="cd00077">
    <property type="entry name" value="HDc"/>
    <property type="match status" value="1"/>
</dbReference>
<dbReference type="CDD" id="cd22431">
    <property type="entry name" value="KH-I_RNaseY"/>
    <property type="match status" value="1"/>
</dbReference>
<dbReference type="FunFam" id="3.30.1370.10:FF:000006">
    <property type="entry name" value="Ribonuclease Y"/>
    <property type="match status" value="1"/>
</dbReference>
<dbReference type="Gene3D" id="1.10.3210.10">
    <property type="entry name" value="Hypothetical protein af1432"/>
    <property type="match status" value="1"/>
</dbReference>
<dbReference type="Gene3D" id="3.30.1370.10">
    <property type="entry name" value="K Homology domain, type 1"/>
    <property type="match status" value="1"/>
</dbReference>
<dbReference type="HAMAP" id="MF_00335">
    <property type="entry name" value="RNase_Y"/>
    <property type="match status" value="1"/>
</dbReference>
<dbReference type="InterPro" id="IPR003607">
    <property type="entry name" value="HD/PDEase_dom"/>
</dbReference>
<dbReference type="InterPro" id="IPR006674">
    <property type="entry name" value="HD_domain"/>
</dbReference>
<dbReference type="InterPro" id="IPR006675">
    <property type="entry name" value="HDIG_dom"/>
</dbReference>
<dbReference type="InterPro" id="IPR004087">
    <property type="entry name" value="KH_dom"/>
</dbReference>
<dbReference type="InterPro" id="IPR004088">
    <property type="entry name" value="KH_dom_type_1"/>
</dbReference>
<dbReference type="InterPro" id="IPR036612">
    <property type="entry name" value="KH_dom_type_1_sf"/>
</dbReference>
<dbReference type="InterPro" id="IPR017705">
    <property type="entry name" value="Ribonuclease_Y"/>
</dbReference>
<dbReference type="InterPro" id="IPR022711">
    <property type="entry name" value="RNase_Y_N"/>
</dbReference>
<dbReference type="NCBIfam" id="TIGR00277">
    <property type="entry name" value="HDIG"/>
    <property type="match status" value="1"/>
</dbReference>
<dbReference type="NCBIfam" id="TIGR03319">
    <property type="entry name" value="RNase_Y"/>
    <property type="match status" value="1"/>
</dbReference>
<dbReference type="PANTHER" id="PTHR12826">
    <property type="entry name" value="RIBONUCLEASE Y"/>
    <property type="match status" value="1"/>
</dbReference>
<dbReference type="PANTHER" id="PTHR12826:SF15">
    <property type="entry name" value="RIBONUCLEASE Y"/>
    <property type="match status" value="1"/>
</dbReference>
<dbReference type="Pfam" id="PF01966">
    <property type="entry name" value="HD"/>
    <property type="match status" value="1"/>
</dbReference>
<dbReference type="Pfam" id="PF00013">
    <property type="entry name" value="KH_1"/>
    <property type="match status" value="1"/>
</dbReference>
<dbReference type="Pfam" id="PF12072">
    <property type="entry name" value="RNase_Y_N"/>
    <property type="match status" value="1"/>
</dbReference>
<dbReference type="SMART" id="SM00471">
    <property type="entry name" value="HDc"/>
    <property type="match status" value="1"/>
</dbReference>
<dbReference type="SMART" id="SM00322">
    <property type="entry name" value="KH"/>
    <property type="match status" value="1"/>
</dbReference>
<dbReference type="SUPFAM" id="SSF54791">
    <property type="entry name" value="Eukaryotic type KH-domain (KH-domain type I)"/>
    <property type="match status" value="1"/>
</dbReference>
<dbReference type="SUPFAM" id="SSF109604">
    <property type="entry name" value="HD-domain/PDEase-like"/>
    <property type="match status" value="1"/>
</dbReference>
<dbReference type="PROSITE" id="PS51831">
    <property type="entry name" value="HD"/>
    <property type="match status" value="1"/>
</dbReference>
<dbReference type="PROSITE" id="PS50084">
    <property type="entry name" value="KH_TYPE_1"/>
    <property type="match status" value="1"/>
</dbReference>
<name>RNY_LACP7</name>